<name>ISPF_CUTAK</name>
<protein>
    <recommendedName>
        <fullName evidence="1">2-C-methyl-D-erythritol 2,4-cyclodiphosphate synthase</fullName>
        <shortName evidence="1">MECDP-synthase</shortName>
        <shortName evidence="1">MECPP-synthase</shortName>
        <shortName evidence="1">MECPS</shortName>
        <ecNumber evidence="1">4.6.1.12</ecNumber>
    </recommendedName>
</protein>
<comment type="function">
    <text evidence="1">Involved in the biosynthesis of isopentenyl diphosphate (IPP) and dimethylallyl diphosphate (DMAPP), two major building blocks of isoprenoid compounds. Catalyzes the conversion of 4-diphosphocytidyl-2-C-methyl-D-erythritol 2-phosphate (CDP-ME2P) to 2-C-methyl-D-erythritol 2,4-cyclodiphosphate (ME-CPP) with a corresponding release of cytidine 5-monophosphate (CMP).</text>
</comment>
<comment type="catalytic activity">
    <reaction evidence="1">
        <text>4-CDP-2-C-methyl-D-erythritol 2-phosphate = 2-C-methyl-D-erythritol 2,4-cyclic diphosphate + CMP</text>
        <dbReference type="Rhea" id="RHEA:23864"/>
        <dbReference type="ChEBI" id="CHEBI:57919"/>
        <dbReference type="ChEBI" id="CHEBI:58483"/>
        <dbReference type="ChEBI" id="CHEBI:60377"/>
        <dbReference type="EC" id="4.6.1.12"/>
    </reaction>
</comment>
<comment type="cofactor">
    <cofactor evidence="1">
        <name>a divalent metal cation</name>
        <dbReference type="ChEBI" id="CHEBI:60240"/>
    </cofactor>
    <text evidence="1">Binds 1 divalent metal cation per subunit.</text>
</comment>
<comment type="pathway">
    <text evidence="1">Isoprenoid biosynthesis; isopentenyl diphosphate biosynthesis via DXP pathway; isopentenyl diphosphate from 1-deoxy-D-xylulose 5-phosphate: step 4/6.</text>
</comment>
<comment type="subunit">
    <text evidence="1">Homotrimer.</text>
</comment>
<comment type="similarity">
    <text evidence="1">Belongs to the IspF family.</text>
</comment>
<proteinExistence type="inferred from homology"/>
<gene>
    <name evidence="1" type="primary">ispF</name>
    <name type="ordered locus">PPA0354</name>
</gene>
<dbReference type="EC" id="4.6.1.12" evidence="1"/>
<dbReference type="EMBL" id="AE017283">
    <property type="protein sequence ID" value="AAT82109.1"/>
    <property type="molecule type" value="Genomic_DNA"/>
</dbReference>
<dbReference type="SMR" id="Q6AAV7"/>
<dbReference type="EnsemblBacteria" id="AAT82109">
    <property type="protein sequence ID" value="AAT82109"/>
    <property type="gene ID" value="PPA0354"/>
</dbReference>
<dbReference type="KEGG" id="pac:PPA0354"/>
<dbReference type="eggNOG" id="COG0245">
    <property type="taxonomic scope" value="Bacteria"/>
</dbReference>
<dbReference type="HOGENOM" id="CLU_084630_1_0_11"/>
<dbReference type="UniPathway" id="UPA00056">
    <property type="reaction ID" value="UER00095"/>
</dbReference>
<dbReference type="Proteomes" id="UP000000603">
    <property type="component" value="Chromosome"/>
</dbReference>
<dbReference type="GO" id="GO:0008685">
    <property type="term" value="F:2-C-methyl-D-erythritol 2,4-cyclodiphosphate synthase activity"/>
    <property type="evidence" value="ECO:0007669"/>
    <property type="project" value="UniProtKB-UniRule"/>
</dbReference>
<dbReference type="GO" id="GO:0046872">
    <property type="term" value="F:metal ion binding"/>
    <property type="evidence" value="ECO:0007669"/>
    <property type="project" value="UniProtKB-KW"/>
</dbReference>
<dbReference type="GO" id="GO:0019288">
    <property type="term" value="P:isopentenyl diphosphate biosynthetic process, methylerythritol 4-phosphate pathway"/>
    <property type="evidence" value="ECO:0007669"/>
    <property type="project" value="UniProtKB-UniRule"/>
</dbReference>
<dbReference type="GO" id="GO:0016114">
    <property type="term" value="P:terpenoid biosynthetic process"/>
    <property type="evidence" value="ECO:0007669"/>
    <property type="project" value="InterPro"/>
</dbReference>
<dbReference type="CDD" id="cd00554">
    <property type="entry name" value="MECDP_synthase"/>
    <property type="match status" value="1"/>
</dbReference>
<dbReference type="FunFam" id="3.30.1330.50:FF:000003">
    <property type="entry name" value="2-C-methyl-D-erythritol 2,4-cyclodiphosphate synthase"/>
    <property type="match status" value="1"/>
</dbReference>
<dbReference type="Gene3D" id="3.30.1330.50">
    <property type="entry name" value="2-C-methyl-D-erythritol 2,4-cyclodiphosphate synthase"/>
    <property type="match status" value="1"/>
</dbReference>
<dbReference type="HAMAP" id="MF_00107">
    <property type="entry name" value="IspF"/>
    <property type="match status" value="1"/>
</dbReference>
<dbReference type="InterPro" id="IPR003526">
    <property type="entry name" value="MECDP_synthase"/>
</dbReference>
<dbReference type="InterPro" id="IPR020555">
    <property type="entry name" value="MECDP_synthase_CS"/>
</dbReference>
<dbReference type="InterPro" id="IPR036571">
    <property type="entry name" value="MECDP_synthase_sf"/>
</dbReference>
<dbReference type="NCBIfam" id="TIGR00151">
    <property type="entry name" value="ispF"/>
    <property type="match status" value="1"/>
</dbReference>
<dbReference type="PANTHER" id="PTHR43181">
    <property type="entry name" value="2-C-METHYL-D-ERYTHRITOL 2,4-CYCLODIPHOSPHATE SYNTHASE, CHLOROPLASTIC"/>
    <property type="match status" value="1"/>
</dbReference>
<dbReference type="PANTHER" id="PTHR43181:SF1">
    <property type="entry name" value="2-C-METHYL-D-ERYTHRITOL 2,4-CYCLODIPHOSPHATE SYNTHASE, CHLOROPLASTIC"/>
    <property type="match status" value="1"/>
</dbReference>
<dbReference type="Pfam" id="PF02542">
    <property type="entry name" value="YgbB"/>
    <property type="match status" value="1"/>
</dbReference>
<dbReference type="SUPFAM" id="SSF69765">
    <property type="entry name" value="IpsF-like"/>
    <property type="match status" value="1"/>
</dbReference>
<dbReference type="PROSITE" id="PS01350">
    <property type="entry name" value="ISPF"/>
    <property type="match status" value="1"/>
</dbReference>
<keyword id="KW-0414">Isoprene biosynthesis</keyword>
<keyword id="KW-0456">Lyase</keyword>
<keyword id="KW-0479">Metal-binding</keyword>
<feature type="chain" id="PRO_0000189494" description="2-C-methyl-D-erythritol 2,4-cyclodiphosphate synthase">
    <location>
        <begin position="1"/>
        <end position="168"/>
    </location>
</feature>
<feature type="binding site" evidence="1">
    <location>
        <begin position="11"/>
        <end position="13"/>
    </location>
    <ligand>
        <name>4-CDP-2-C-methyl-D-erythritol 2-phosphate</name>
        <dbReference type="ChEBI" id="CHEBI:57919"/>
    </ligand>
</feature>
<feature type="binding site" evidence="1">
    <location>
        <position position="11"/>
    </location>
    <ligand>
        <name>a divalent metal cation</name>
        <dbReference type="ChEBI" id="CHEBI:60240"/>
    </ligand>
</feature>
<feature type="binding site" evidence="1">
    <location>
        <position position="13"/>
    </location>
    <ligand>
        <name>a divalent metal cation</name>
        <dbReference type="ChEBI" id="CHEBI:60240"/>
    </ligand>
</feature>
<feature type="binding site" evidence="1">
    <location>
        <begin position="38"/>
        <end position="39"/>
    </location>
    <ligand>
        <name>4-CDP-2-C-methyl-D-erythritol 2-phosphate</name>
        <dbReference type="ChEBI" id="CHEBI:57919"/>
    </ligand>
</feature>
<feature type="binding site" evidence="1">
    <location>
        <position position="46"/>
    </location>
    <ligand>
        <name>a divalent metal cation</name>
        <dbReference type="ChEBI" id="CHEBI:60240"/>
    </ligand>
</feature>
<feature type="binding site" evidence="1">
    <location>
        <begin position="60"/>
        <end position="62"/>
    </location>
    <ligand>
        <name>4-CDP-2-C-methyl-D-erythritol 2-phosphate</name>
        <dbReference type="ChEBI" id="CHEBI:57919"/>
    </ligand>
</feature>
<feature type="binding site" evidence="1">
    <location>
        <begin position="133"/>
        <end position="136"/>
    </location>
    <ligand>
        <name>4-CDP-2-C-methyl-D-erythritol 2-phosphate</name>
        <dbReference type="ChEBI" id="CHEBI:57919"/>
    </ligand>
</feature>
<feature type="binding site" evidence="1">
    <location>
        <position position="140"/>
    </location>
    <ligand>
        <name>4-CDP-2-C-methyl-D-erythritol 2-phosphate</name>
        <dbReference type="ChEBI" id="CHEBI:57919"/>
    </ligand>
</feature>
<feature type="binding site" evidence="1">
    <location>
        <position position="143"/>
    </location>
    <ligand>
        <name>4-CDP-2-C-methyl-D-erythritol 2-phosphate</name>
        <dbReference type="ChEBI" id="CHEBI:57919"/>
    </ligand>
</feature>
<feature type="site" description="Transition state stabilizer" evidence="1">
    <location>
        <position position="38"/>
    </location>
</feature>
<feature type="site" description="Transition state stabilizer" evidence="1">
    <location>
        <position position="134"/>
    </location>
</feature>
<sequence>MIEIRTGIGTDVHQLSAGVPMHVAGLSFPDETVGLVGHSDGDVACHAICDALLSATGLGDIGSIFGTADPQWAGAAGVALLGHVVALVTGEGWTIQNVAVQVVGQRPRMAARRAEAEAALAQTVGAPVSVSATTTDHLGFTGRGEGVAAIASALVTRGLKGEDSSLIR</sequence>
<organism>
    <name type="scientific">Cutibacterium acnes (strain DSM 16379 / KPA171202)</name>
    <name type="common">Propionibacterium acnes</name>
    <dbReference type="NCBI Taxonomy" id="267747"/>
    <lineage>
        <taxon>Bacteria</taxon>
        <taxon>Bacillati</taxon>
        <taxon>Actinomycetota</taxon>
        <taxon>Actinomycetes</taxon>
        <taxon>Propionibacteriales</taxon>
        <taxon>Propionibacteriaceae</taxon>
        <taxon>Cutibacterium</taxon>
    </lineage>
</organism>
<evidence type="ECO:0000255" key="1">
    <source>
        <dbReference type="HAMAP-Rule" id="MF_00107"/>
    </source>
</evidence>
<accession>Q6AAV7</accession>
<reference key="1">
    <citation type="journal article" date="2004" name="Science">
        <title>The complete genome sequence of Propionibacterium acnes, a commensal of human skin.</title>
        <authorList>
            <person name="Brueggemann H."/>
            <person name="Henne A."/>
            <person name="Hoster F."/>
            <person name="Liesegang H."/>
            <person name="Wiezer A."/>
            <person name="Strittmatter A."/>
            <person name="Hujer S."/>
            <person name="Duerre P."/>
            <person name="Gottschalk G."/>
        </authorList>
    </citation>
    <scope>NUCLEOTIDE SEQUENCE [LARGE SCALE GENOMIC DNA]</scope>
    <source>
        <strain>DSM 16379 / KPA171202</strain>
    </source>
</reference>